<name>YJB6_YEAST</name>
<organism>
    <name type="scientific">Saccharomyces cerevisiae (strain ATCC 204508 / S288c)</name>
    <name type="common">Baker's yeast</name>
    <dbReference type="NCBI Taxonomy" id="559292"/>
    <lineage>
        <taxon>Eukaryota</taxon>
        <taxon>Fungi</taxon>
        <taxon>Dikarya</taxon>
        <taxon>Ascomycota</taxon>
        <taxon>Saccharomycotina</taxon>
        <taxon>Saccharomycetes</taxon>
        <taxon>Saccharomycetales</taxon>
        <taxon>Saccharomycetaceae</taxon>
        <taxon>Saccharomyces</taxon>
    </lineage>
</organism>
<keyword id="KW-0963">Cytoplasm</keyword>
<keyword id="KW-0597">Phosphoprotein</keyword>
<keyword id="KW-1185">Reference proteome</keyword>
<comment type="subcellular location">
    <subcellularLocation>
        <location evidence="2">Cytoplasm</location>
    </subcellularLocation>
</comment>
<comment type="miscellaneous">
    <text evidence="3">Present with 3360 molecules/cell in log phase SD medium.</text>
</comment>
<comment type="sequence caution" evidence="4">
    <conflict type="frameshift">
        <sequence resource="EMBL-CDS" id="CAA89306"/>
    </conflict>
</comment>
<comment type="sequence caution" evidence="4">
    <conflict type="frameshift">
        <sequence resource="EMBL-CDS" id="CAA89308"/>
    </conflict>
</comment>
<feature type="chain" id="PRO_0000203075" description="Uncharacterized protein YJL016W">
    <location>
        <begin position="1"/>
        <end position="561"/>
    </location>
</feature>
<feature type="region of interest" description="Disordered" evidence="1">
    <location>
        <begin position="314"/>
        <end position="366"/>
    </location>
</feature>
<feature type="compositionally biased region" description="Low complexity" evidence="1">
    <location>
        <begin position="314"/>
        <end position="323"/>
    </location>
</feature>
<feature type="compositionally biased region" description="Polar residues" evidence="1">
    <location>
        <begin position="324"/>
        <end position="340"/>
    </location>
</feature>
<feature type="modified residue" description="Phosphoserine" evidence="5 6">
    <location>
        <position position="514"/>
    </location>
</feature>
<sequence>MGILDSLKKPVNIKSSLPKFSRSATSINLSSHPVSSRSFLELPPELFSITKPIFKLLQAHANKIYFQSSDAEAVWNVKDSSGHVFEAESISLLGSHIIITNSSVQVADVAIIDSPSNINQCEISSVGEFLQFNNGQLSITCNDFGLLEKFKRLCMISIFEFISIYKALTGTVISSYGLRMSDMHIILNSPFNFKDWCEVYLDGQGWVKVWCHIDKVSKTNNSKSSSDNDAKGKYQIRFYRDDKSTSSKNCVFFIPDNEYVQDIFFYNINAAEPSKNMNDFFQGLQMIKLVGNVRFCSDTDFNDVVDSGSIYSSANNGSGDSSSTALNNESPNTTPKSRTFFSPKGHRRNSSHVSSLTSRSTKKPITNFTTRTNGLLIRPLPHHGVHHLEAMIRFIIPLMDCARLYGRPVQFKTERTDINSLMFGLPKLPSVDYFAEEEIAHLMTQEFNPLKEKDTDDTMALTMSRFSSYLQERMTKVSKRNTELNFRTFSDVMGMYNTTRDHSKLNCMSDKDNSVKEFSLSDKSNVSSETTNMMNQLQVNAHEYKSSMCERPIVASTSPIA</sequence>
<evidence type="ECO:0000256" key="1">
    <source>
        <dbReference type="SAM" id="MobiDB-lite"/>
    </source>
</evidence>
<evidence type="ECO:0000269" key="2">
    <source>
    </source>
</evidence>
<evidence type="ECO:0000269" key="3">
    <source>
    </source>
</evidence>
<evidence type="ECO:0000305" key="4"/>
<evidence type="ECO:0007744" key="5">
    <source>
    </source>
</evidence>
<evidence type="ECO:0007744" key="6">
    <source>
    </source>
</evidence>
<proteinExistence type="evidence at protein level"/>
<accession>P47072</accession>
<accession>D6VWG2</accession>
<accession>P47071</accession>
<accession>Q86ZR5</accession>
<reference key="1">
    <citation type="journal article" date="1996" name="EMBO J.">
        <title>Complete nucleotide sequence of Saccharomyces cerevisiae chromosome X.</title>
        <authorList>
            <person name="Galibert F."/>
            <person name="Alexandraki D."/>
            <person name="Baur A."/>
            <person name="Boles E."/>
            <person name="Chalwatzis N."/>
            <person name="Chuat J.-C."/>
            <person name="Coster F."/>
            <person name="Cziepluch C."/>
            <person name="de Haan M."/>
            <person name="Domdey H."/>
            <person name="Durand P."/>
            <person name="Entian K.-D."/>
            <person name="Gatius M."/>
            <person name="Goffeau A."/>
            <person name="Grivell L.A."/>
            <person name="Hennemann A."/>
            <person name="Herbert C.J."/>
            <person name="Heumann K."/>
            <person name="Hilger F."/>
            <person name="Hollenberg C.P."/>
            <person name="Huang M.-E."/>
            <person name="Jacq C."/>
            <person name="Jauniaux J.-C."/>
            <person name="Katsoulou C."/>
            <person name="Kirchrath L."/>
            <person name="Kleine K."/>
            <person name="Kordes E."/>
            <person name="Koetter P."/>
            <person name="Liebl S."/>
            <person name="Louis E.J."/>
            <person name="Manus V."/>
            <person name="Mewes H.-W."/>
            <person name="Miosga T."/>
            <person name="Obermaier B."/>
            <person name="Perea J."/>
            <person name="Pohl T.M."/>
            <person name="Portetelle D."/>
            <person name="Pujol A."/>
            <person name="Purnelle B."/>
            <person name="Ramezani Rad M."/>
            <person name="Rasmussen S.W."/>
            <person name="Rose M."/>
            <person name="Rossau R."/>
            <person name="Schaaff-Gerstenschlaeger I."/>
            <person name="Smits P.H.M."/>
            <person name="Scarcez T."/>
            <person name="Soriano N."/>
            <person name="To Van D."/>
            <person name="Tzermia M."/>
            <person name="Van Broekhoven A."/>
            <person name="Vandenbol M."/>
            <person name="Wedler H."/>
            <person name="von Wettstein D."/>
            <person name="Wambutt R."/>
            <person name="Zagulski M."/>
            <person name="Zollner A."/>
            <person name="Karpfinger-Hartl L."/>
        </authorList>
    </citation>
    <scope>NUCLEOTIDE SEQUENCE [LARGE SCALE GENOMIC DNA]</scope>
    <source>
        <strain>ATCC 204508 / S288c</strain>
    </source>
</reference>
<reference key="2">
    <citation type="journal article" date="2014" name="G3 (Bethesda)">
        <title>The reference genome sequence of Saccharomyces cerevisiae: Then and now.</title>
        <authorList>
            <person name="Engel S.R."/>
            <person name="Dietrich F.S."/>
            <person name="Fisk D.G."/>
            <person name="Binkley G."/>
            <person name="Balakrishnan R."/>
            <person name="Costanzo M.C."/>
            <person name="Dwight S.S."/>
            <person name="Hitz B.C."/>
            <person name="Karra K."/>
            <person name="Nash R.S."/>
            <person name="Weng S."/>
            <person name="Wong E.D."/>
            <person name="Lloyd P."/>
            <person name="Skrzypek M.S."/>
            <person name="Miyasato S.R."/>
            <person name="Simison M."/>
            <person name="Cherry J.M."/>
        </authorList>
    </citation>
    <scope>GENOME REANNOTATION</scope>
    <source>
        <strain>ATCC 204508 / S288c</strain>
    </source>
</reference>
<reference key="3">
    <citation type="journal article" date="2003" name="Genome Biol.">
        <title>Reinvestigation of the Saccharomyces cerevisiae genome annotation by comparison to the genome of a related fungus: Ashbya gossypii.</title>
        <authorList>
            <person name="Brachat S."/>
            <person name="Dietrich F.S."/>
            <person name="Voegeli S."/>
            <person name="Zhang Z."/>
            <person name="Stuart L."/>
            <person name="Lerch A."/>
            <person name="Gates K."/>
            <person name="Gaffney T.D."/>
            <person name="Philippsen P."/>
        </authorList>
    </citation>
    <scope>NUCLEOTIDE SEQUENCE [GENOMIC DNA] OF 295-377</scope>
    <scope>IDENTIFICATION OF FRAMESHIFT</scope>
    <source>
        <strain>ATCC 204511 / S288c / AB972</strain>
    </source>
</reference>
<reference key="4">
    <citation type="journal article" date="2007" name="Genome Res.">
        <title>Approaching a complete repository of sequence-verified protein-encoding clones for Saccharomyces cerevisiae.</title>
        <authorList>
            <person name="Hu Y."/>
            <person name="Rolfs A."/>
            <person name="Bhullar B."/>
            <person name="Murthy T.V.S."/>
            <person name="Zhu C."/>
            <person name="Berger M.F."/>
            <person name="Camargo A.A."/>
            <person name="Kelley F."/>
            <person name="McCarron S."/>
            <person name="Jepson D."/>
            <person name="Richardson A."/>
            <person name="Raphael J."/>
            <person name="Moreira D."/>
            <person name="Taycher E."/>
            <person name="Zuo D."/>
            <person name="Mohr S."/>
            <person name="Kane M.F."/>
            <person name="Williamson J."/>
            <person name="Simpson A.J.G."/>
            <person name="Bulyk M.L."/>
            <person name="Harlow E."/>
            <person name="Marsischky G."/>
            <person name="Kolodner R.D."/>
            <person name="LaBaer J."/>
        </authorList>
    </citation>
    <scope>NUCLEOTIDE SEQUENCE [GENOMIC DNA] OF 391-561</scope>
    <source>
        <strain>ATCC 204508 / S288c</strain>
    </source>
</reference>
<reference key="5">
    <citation type="journal article" date="2003" name="Nature">
        <title>Global analysis of protein localization in budding yeast.</title>
        <authorList>
            <person name="Huh W.-K."/>
            <person name="Falvo J.V."/>
            <person name="Gerke L.C."/>
            <person name="Carroll A.S."/>
            <person name="Howson R.W."/>
            <person name="Weissman J.S."/>
            <person name="O'Shea E.K."/>
        </authorList>
    </citation>
    <scope>SUBCELLULAR LOCATION [LARGE SCALE ANALYSIS]</scope>
</reference>
<reference key="6">
    <citation type="journal article" date="2003" name="Nature">
        <title>Global analysis of protein expression in yeast.</title>
        <authorList>
            <person name="Ghaemmaghami S."/>
            <person name="Huh W.-K."/>
            <person name="Bower K."/>
            <person name="Howson R.W."/>
            <person name="Belle A."/>
            <person name="Dephoure N."/>
            <person name="O'Shea E.K."/>
            <person name="Weissman J.S."/>
        </authorList>
    </citation>
    <scope>LEVEL OF PROTEIN EXPRESSION [LARGE SCALE ANALYSIS]</scope>
</reference>
<reference key="7">
    <citation type="journal article" date="2008" name="Mol. Cell. Proteomics">
        <title>A multidimensional chromatography technology for in-depth phosphoproteome analysis.</title>
        <authorList>
            <person name="Albuquerque C.P."/>
            <person name="Smolka M.B."/>
            <person name="Payne S.H."/>
            <person name="Bafna V."/>
            <person name="Eng J."/>
            <person name="Zhou H."/>
        </authorList>
    </citation>
    <scope>PHOSPHORYLATION [LARGE SCALE ANALYSIS] AT SER-514</scope>
    <scope>IDENTIFICATION BY MASS SPECTROMETRY [LARGE SCALE ANALYSIS]</scope>
</reference>
<reference key="8">
    <citation type="journal article" date="2009" name="Science">
        <title>Global analysis of Cdk1 substrate phosphorylation sites provides insights into evolution.</title>
        <authorList>
            <person name="Holt L.J."/>
            <person name="Tuch B.B."/>
            <person name="Villen J."/>
            <person name="Johnson A.D."/>
            <person name="Gygi S.P."/>
            <person name="Morgan D.O."/>
        </authorList>
    </citation>
    <scope>PHOSPHORYLATION [LARGE SCALE ANALYSIS] AT SER-514</scope>
    <scope>IDENTIFICATION BY MASS SPECTROMETRY [LARGE SCALE ANALYSIS]</scope>
</reference>
<gene>
    <name type="ordered locus">YJL016W</name>
    <name type="ORF">J1320</name>
    <name type="ORF">J1326</name>
    <name type="ORF">YJL017W</name>
</gene>
<protein>
    <recommendedName>
        <fullName>Uncharacterized protein YJL016W</fullName>
    </recommendedName>
</protein>
<dbReference type="EMBL" id="Z49291">
    <property type="protein sequence ID" value="CAA89306.1"/>
    <property type="status" value="ALT_FRAME"/>
    <property type="molecule type" value="Genomic_DNA"/>
</dbReference>
<dbReference type="EMBL" id="Z49292">
    <property type="protein sequence ID" value="CAA89308.1"/>
    <property type="status" value="ALT_FRAME"/>
    <property type="molecule type" value="Genomic_DNA"/>
</dbReference>
<dbReference type="EMBL" id="AY260898">
    <property type="protein sequence ID" value="AAP21766.1"/>
    <property type="molecule type" value="Genomic_DNA"/>
</dbReference>
<dbReference type="EMBL" id="AY692698">
    <property type="protein sequence ID" value="AAT92717.1"/>
    <property type="molecule type" value="Genomic_DNA"/>
</dbReference>
<dbReference type="EMBL" id="BK006943">
    <property type="protein sequence ID" value="DAA08778.1"/>
    <property type="molecule type" value="Genomic_DNA"/>
</dbReference>
<dbReference type="PIR" id="S56787">
    <property type="entry name" value="S56787"/>
</dbReference>
<dbReference type="PIR" id="S56788">
    <property type="entry name" value="S56788"/>
</dbReference>
<dbReference type="RefSeq" id="NP_012518.2">
    <property type="nucleotide sequence ID" value="NM_001181450.1"/>
</dbReference>
<dbReference type="BioGRID" id="33740">
    <property type="interactions" value="43"/>
</dbReference>
<dbReference type="DIP" id="DIP-4907N"/>
<dbReference type="FunCoup" id="P47072">
    <property type="interactions" value="41"/>
</dbReference>
<dbReference type="IntAct" id="P47072">
    <property type="interactions" value="7"/>
</dbReference>
<dbReference type="MINT" id="P47072"/>
<dbReference type="STRING" id="4932.YJL016W"/>
<dbReference type="iPTMnet" id="P47072"/>
<dbReference type="PaxDb" id="4932-YJL016W"/>
<dbReference type="PeptideAtlas" id="P47072"/>
<dbReference type="TopDownProteomics" id="P47072"/>
<dbReference type="EnsemblFungi" id="YJL016W_mRNA">
    <property type="protein sequence ID" value="YJL016W"/>
    <property type="gene ID" value="YJL016W"/>
</dbReference>
<dbReference type="GeneID" id="853436"/>
<dbReference type="KEGG" id="sce:YJL016W"/>
<dbReference type="AGR" id="SGD:S000003553"/>
<dbReference type="SGD" id="S000003553">
    <property type="gene designation" value="YJL016W"/>
</dbReference>
<dbReference type="VEuPathDB" id="FungiDB:YJL016W"/>
<dbReference type="eggNOG" id="ENOG502QTIE">
    <property type="taxonomic scope" value="Eukaryota"/>
</dbReference>
<dbReference type="GeneTree" id="ENSGT00940000176380"/>
<dbReference type="HOGENOM" id="CLU_017094_2_0_1"/>
<dbReference type="InParanoid" id="P47072"/>
<dbReference type="OMA" id="LIKPIPH"/>
<dbReference type="OrthoDB" id="5563754at2759"/>
<dbReference type="BioCyc" id="YEAST:G3O-31490-MONOMER"/>
<dbReference type="BioGRID-ORCS" id="853436">
    <property type="hits" value="1 hit in 10 CRISPR screens"/>
</dbReference>
<dbReference type="PRO" id="PR:P47072"/>
<dbReference type="Proteomes" id="UP000002311">
    <property type="component" value="Chromosome X"/>
</dbReference>
<dbReference type="RNAct" id="P47072">
    <property type="molecule type" value="protein"/>
</dbReference>
<dbReference type="GO" id="GO:0005737">
    <property type="term" value="C:cytoplasm"/>
    <property type="evidence" value="ECO:0007005"/>
    <property type="project" value="SGD"/>
</dbReference>
<dbReference type="Pfam" id="PF25381">
    <property type="entry name" value="PH_26"/>
    <property type="match status" value="2"/>
</dbReference>